<proteinExistence type="inferred from homology"/>
<name>RNPH_SINFN</name>
<evidence type="ECO:0000255" key="1">
    <source>
        <dbReference type="HAMAP-Rule" id="MF_00564"/>
    </source>
</evidence>
<sequence length="239" mass="26043">MRPSGRKTDQMRKVSFERNFSKHAEGSCLVRFGDTHVLCTASLEDKVPAWLRNGGKGWITAEYGMLPRATGERMRREASTGKQSGRTQEIQRLIGRSLRAVVDLPALGERQISIDCDVIQADGGTRTASITGAWIALHDCLKWMEARNMIKVERVLKDHVAAISCGIFANQAVVDLDYLEDSAAETDANFVMTGSGGLVEIQGTAEGKPFSEEEFASLMQLAKDGIAELVALQKQAVAG</sequence>
<organism>
    <name type="scientific">Sinorhizobium fredii (strain NBRC 101917 / NGR234)</name>
    <dbReference type="NCBI Taxonomy" id="394"/>
    <lineage>
        <taxon>Bacteria</taxon>
        <taxon>Pseudomonadati</taxon>
        <taxon>Pseudomonadota</taxon>
        <taxon>Alphaproteobacteria</taxon>
        <taxon>Hyphomicrobiales</taxon>
        <taxon>Rhizobiaceae</taxon>
        <taxon>Sinorhizobium/Ensifer group</taxon>
        <taxon>Sinorhizobium</taxon>
    </lineage>
</organism>
<gene>
    <name evidence="1" type="primary">rph</name>
    <name type="ordered locus">NGR_c00100</name>
</gene>
<comment type="function">
    <text evidence="1">Phosphorolytic 3'-5' exoribonuclease that plays an important role in tRNA 3'-end maturation. Removes nucleotide residues following the 3'-CCA terminus of tRNAs; can also add nucleotides to the ends of RNA molecules by using nucleoside diphosphates as substrates, but this may not be physiologically important. Probably plays a role in initiation of 16S rRNA degradation (leading to ribosome degradation) during starvation.</text>
</comment>
<comment type="catalytic activity">
    <reaction evidence="1">
        <text>tRNA(n+1) + phosphate = tRNA(n) + a ribonucleoside 5'-diphosphate</text>
        <dbReference type="Rhea" id="RHEA:10628"/>
        <dbReference type="Rhea" id="RHEA-COMP:17343"/>
        <dbReference type="Rhea" id="RHEA-COMP:17344"/>
        <dbReference type="ChEBI" id="CHEBI:43474"/>
        <dbReference type="ChEBI" id="CHEBI:57930"/>
        <dbReference type="ChEBI" id="CHEBI:173114"/>
        <dbReference type="EC" id="2.7.7.56"/>
    </reaction>
</comment>
<comment type="subunit">
    <text evidence="1">Homohexameric ring arranged as a trimer of dimers.</text>
</comment>
<comment type="similarity">
    <text evidence="1">Belongs to the RNase PH family.</text>
</comment>
<feature type="chain" id="PRO_1000146785" description="Ribonuclease PH">
    <location>
        <begin position="1"/>
        <end position="239"/>
    </location>
</feature>
<feature type="binding site" evidence="1">
    <location>
        <position position="86"/>
    </location>
    <ligand>
        <name>phosphate</name>
        <dbReference type="ChEBI" id="CHEBI:43474"/>
        <note>substrate</note>
    </ligand>
</feature>
<feature type="binding site" evidence="1">
    <location>
        <begin position="124"/>
        <end position="126"/>
    </location>
    <ligand>
        <name>phosphate</name>
        <dbReference type="ChEBI" id="CHEBI:43474"/>
        <note>substrate</note>
    </ligand>
</feature>
<keyword id="KW-0548">Nucleotidyltransferase</keyword>
<keyword id="KW-1185">Reference proteome</keyword>
<keyword id="KW-0694">RNA-binding</keyword>
<keyword id="KW-0698">rRNA processing</keyword>
<keyword id="KW-0808">Transferase</keyword>
<keyword id="KW-0819">tRNA processing</keyword>
<keyword id="KW-0820">tRNA-binding</keyword>
<protein>
    <recommendedName>
        <fullName evidence="1">Ribonuclease PH</fullName>
        <shortName evidence="1">RNase PH</shortName>
        <ecNumber evidence="1">2.7.7.56</ecNumber>
    </recommendedName>
    <alternativeName>
        <fullName evidence="1">tRNA nucleotidyltransferase</fullName>
    </alternativeName>
</protein>
<reference key="1">
    <citation type="journal article" date="2009" name="Appl. Environ. Microbiol.">
        <title>Rhizobium sp. strain NGR234 possesses a remarkable number of secretion systems.</title>
        <authorList>
            <person name="Schmeisser C."/>
            <person name="Liesegang H."/>
            <person name="Krysciak D."/>
            <person name="Bakkou N."/>
            <person name="Le Quere A."/>
            <person name="Wollherr A."/>
            <person name="Heinemeyer I."/>
            <person name="Morgenstern B."/>
            <person name="Pommerening-Roeser A."/>
            <person name="Flores M."/>
            <person name="Palacios R."/>
            <person name="Brenner S."/>
            <person name="Gottschalk G."/>
            <person name="Schmitz R.A."/>
            <person name="Broughton W.J."/>
            <person name="Perret X."/>
            <person name="Strittmatter A.W."/>
            <person name="Streit W.R."/>
        </authorList>
    </citation>
    <scope>NUCLEOTIDE SEQUENCE [LARGE SCALE GENOMIC DNA]</scope>
    <source>
        <strain>NBRC 101917 / NGR234</strain>
    </source>
</reference>
<dbReference type="EC" id="2.7.7.56" evidence="1"/>
<dbReference type="EMBL" id="CP001389">
    <property type="protein sequence ID" value="ACP23814.1"/>
    <property type="molecule type" value="Genomic_DNA"/>
</dbReference>
<dbReference type="RefSeq" id="WP_012706599.1">
    <property type="nucleotide sequence ID" value="NC_012587.1"/>
</dbReference>
<dbReference type="RefSeq" id="YP_002824567.1">
    <property type="nucleotide sequence ID" value="NC_012587.1"/>
</dbReference>
<dbReference type="SMR" id="C3MEJ1"/>
<dbReference type="STRING" id="394.NGR_c00100"/>
<dbReference type="KEGG" id="rhi:NGR_c00100"/>
<dbReference type="PATRIC" id="fig|394.7.peg.2800"/>
<dbReference type="eggNOG" id="COG0689">
    <property type="taxonomic scope" value="Bacteria"/>
</dbReference>
<dbReference type="HOGENOM" id="CLU_050858_0_0_5"/>
<dbReference type="OrthoDB" id="9802265at2"/>
<dbReference type="Proteomes" id="UP000001054">
    <property type="component" value="Chromosome"/>
</dbReference>
<dbReference type="GO" id="GO:0000175">
    <property type="term" value="F:3'-5'-RNA exonuclease activity"/>
    <property type="evidence" value="ECO:0007669"/>
    <property type="project" value="UniProtKB-UniRule"/>
</dbReference>
<dbReference type="GO" id="GO:0000049">
    <property type="term" value="F:tRNA binding"/>
    <property type="evidence" value="ECO:0007669"/>
    <property type="project" value="UniProtKB-UniRule"/>
</dbReference>
<dbReference type="GO" id="GO:0009022">
    <property type="term" value="F:tRNA nucleotidyltransferase activity"/>
    <property type="evidence" value="ECO:0007669"/>
    <property type="project" value="UniProtKB-UniRule"/>
</dbReference>
<dbReference type="GO" id="GO:0016075">
    <property type="term" value="P:rRNA catabolic process"/>
    <property type="evidence" value="ECO:0007669"/>
    <property type="project" value="UniProtKB-UniRule"/>
</dbReference>
<dbReference type="GO" id="GO:0006364">
    <property type="term" value="P:rRNA processing"/>
    <property type="evidence" value="ECO:0007669"/>
    <property type="project" value="UniProtKB-KW"/>
</dbReference>
<dbReference type="GO" id="GO:0008033">
    <property type="term" value="P:tRNA processing"/>
    <property type="evidence" value="ECO:0007669"/>
    <property type="project" value="UniProtKB-UniRule"/>
</dbReference>
<dbReference type="CDD" id="cd11362">
    <property type="entry name" value="RNase_PH_bact"/>
    <property type="match status" value="1"/>
</dbReference>
<dbReference type="FunFam" id="3.30.230.70:FF:000003">
    <property type="entry name" value="Ribonuclease PH"/>
    <property type="match status" value="1"/>
</dbReference>
<dbReference type="Gene3D" id="3.30.230.70">
    <property type="entry name" value="GHMP Kinase, N-terminal domain"/>
    <property type="match status" value="1"/>
</dbReference>
<dbReference type="HAMAP" id="MF_00564">
    <property type="entry name" value="RNase_PH"/>
    <property type="match status" value="1"/>
</dbReference>
<dbReference type="InterPro" id="IPR001247">
    <property type="entry name" value="ExoRNase_PH_dom1"/>
</dbReference>
<dbReference type="InterPro" id="IPR015847">
    <property type="entry name" value="ExoRNase_PH_dom2"/>
</dbReference>
<dbReference type="InterPro" id="IPR036345">
    <property type="entry name" value="ExoRNase_PH_dom2_sf"/>
</dbReference>
<dbReference type="InterPro" id="IPR027408">
    <property type="entry name" value="PNPase/RNase_PH_dom_sf"/>
</dbReference>
<dbReference type="InterPro" id="IPR020568">
    <property type="entry name" value="Ribosomal_Su5_D2-typ_SF"/>
</dbReference>
<dbReference type="InterPro" id="IPR050080">
    <property type="entry name" value="RNase_PH"/>
</dbReference>
<dbReference type="InterPro" id="IPR002381">
    <property type="entry name" value="RNase_PH_bac-type"/>
</dbReference>
<dbReference type="InterPro" id="IPR018336">
    <property type="entry name" value="RNase_PH_CS"/>
</dbReference>
<dbReference type="NCBIfam" id="TIGR01966">
    <property type="entry name" value="RNasePH"/>
    <property type="match status" value="1"/>
</dbReference>
<dbReference type="PANTHER" id="PTHR11953">
    <property type="entry name" value="EXOSOME COMPLEX COMPONENT"/>
    <property type="match status" value="1"/>
</dbReference>
<dbReference type="PANTHER" id="PTHR11953:SF0">
    <property type="entry name" value="EXOSOME COMPLEX COMPONENT RRP41"/>
    <property type="match status" value="1"/>
</dbReference>
<dbReference type="Pfam" id="PF01138">
    <property type="entry name" value="RNase_PH"/>
    <property type="match status" value="1"/>
</dbReference>
<dbReference type="Pfam" id="PF03725">
    <property type="entry name" value="RNase_PH_C"/>
    <property type="match status" value="1"/>
</dbReference>
<dbReference type="SUPFAM" id="SSF55666">
    <property type="entry name" value="Ribonuclease PH domain 2-like"/>
    <property type="match status" value="1"/>
</dbReference>
<dbReference type="SUPFAM" id="SSF54211">
    <property type="entry name" value="Ribosomal protein S5 domain 2-like"/>
    <property type="match status" value="1"/>
</dbReference>
<dbReference type="PROSITE" id="PS01277">
    <property type="entry name" value="RIBONUCLEASE_PH"/>
    <property type="match status" value="1"/>
</dbReference>
<accession>C3MEJ1</accession>